<accession>C1FNG8</accession>
<reference key="1">
    <citation type="submission" date="2008-10" db="EMBL/GenBank/DDBJ databases">
        <title>Genome sequence of Clostridium botulinum A2 Kyoto.</title>
        <authorList>
            <person name="Shrivastava S."/>
            <person name="Brinkac L.M."/>
            <person name="Brown J.L."/>
            <person name="Bruce D."/>
            <person name="Detter C.C."/>
            <person name="Johnson E.A."/>
            <person name="Munk C.A."/>
            <person name="Smith L.A."/>
            <person name="Smith T.J."/>
            <person name="Sutton G."/>
            <person name="Brettin T.S."/>
        </authorList>
    </citation>
    <scope>NUCLEOTIDE SEQUENCE [LARGE SCALE GENOMIC DNA]</scope>
    <source>
        <strain>Kyoto / Type A2</strain>
    </source>
</reference>
<sequence>MSINDKPIGFFDSGVGGISVLKEAFKLLPKEDFLYYGDSKNAPYGTKKVEEVKALTSNATDFLMNKGIKALVVACNTATSVTINDLRENYDIPIIGIEPALKPAVELKKGGKIIIMATPMTLAEKKFANLMDLYKETEDIEPLPCPGLPELIEQGIVSGDIIYNYLKDKFSKYDNEKISSIVLGCTHYPFIEETLKEVTHNKACIIDGSFGTSRELKRQLKNSNMLREENRVGKVTIFNSREDKDIIDLSYKLFNMK</sequence>
<gene>
    <name evidence="1" type="primary">murI</name>
    <name type="ordered locus">CLM_4055</name>
</gene>
<dbReference type="EC" id="5.1.1.3" evidence="1"/>
<dbReference type="EMBL" id="CP001581">
    <property type="protein sequence ID" value="ACO83829.1"/>
    <property type="molecule type" value="Genomic_DNA"/>
</dbReference>
<dbReference type="RefSeq" id="WP_012703898.1">
    <property type="nucleotide sequence ID" value="NC_012563.1"/>
</dbReference>
<dbReference type="SMR" id="C1FNG8"/>
<dbReference type="KEGG" id="cby:CLM_4055"/>
<dbReference type="eggNOG" id="COG0796">
    <property type="taxonomic scope" value="Bacteria"/>
</dbReference>
<dbReference type="HOGENOM" id="CLU_052344_1_0_9"/>
<dbReference type="UniPathway" id="UPA00219"/>
<dbReference type="Proteomes" id="UP000001374">
    <property type="component" value="Chromosome"/>
</dbReference>
<dbReference type="GO" id="GO:0008881">
    <property type="term" value="F:glutamate racemase activity"/>
    <property type="evidence" value="ECO:0007669"/>
    <property type="project" value="UniProtKB-UniRule"/>
</dbReference>
<dbReference type="GO" id="GO:0071555">
    <property type="term" value="P:cell wall organization"/>
    <property type="evidence" value="ECO:0007669"/>
    <property type="project" value="UniProtKB-KW"/>
</dbReference>
<dbReference type="GO" id="GO:0009252">
    <property type="term" value="P:peptidoglycan biosynthetic process"/>
    <property type="evidence" value="ECO:0007669"/>
    <property type="project" value="UniProtKB-UniRule"/>
</dbReference>
<dbReference type="GO" id="GO:0008360">
    <property type="term" value="P:regulation of cell shape"/>
    <property type="evidence" value="ECO:0007669"/>
    <property type="project" value="UniProtKB-KW"/>
</dbReference>
<dbReference type="FunFam" id="3.40.50.1860:FF:000002">
    <property type="entry name" value="Glutamate racemase"/>
    <property type="match status" value="1"/>
</dbReference>
<dbReference type="Gene3D" id="3.40.50.1860">
    <property type="match status" value="2"/>
</dbReference>
<dbReference type="HAMAP" id="MF_00258">
    <property type="entry name" value="Glu_racemase"/>
    <property type="match status" value="1"/>
</dbReference>
<dbReference type="InterPro" id="IPR015942">
    <property type="entry name" value="Asp/Glu/hydantoin_racemase"/>
</dbReference>
<dbReference type="InterPro" id="IPR001920">
    <property type="entry name" value="Asp/Glu_race"/>
</dbReference>
<dbReference type="InterPro" id="IPR018187">
    <property type="entry name" value="Asp/Glu_racemase_AS_1"/>
</dbReference>
<dbReference type="InterPro" id="IPR033134">
    <property type="entry name" value="Asp/Glu_racemase_AS_2"/>
</dbReference>
<dbReference type="InterPro" id="IPR004391">
    <property type="entry name" value="Glu_race"/>
</dbReference>
<dbReference type="NCBIfam" id="TIGR00067">
    <property type="entry name" value="glut_race"/>
    <property type="match status" value="1"/>
</dbReference>
<dbReference type="PANTHER" id="PTHR21198">
    <property type="entry name" value="GLUTAMATE RACEMASE"/>
    <property type="match status" value="1"/>
</dbReference>
<dbReference type="PANTHER" id="PTHR21198:SF3">
    <property type="entry name" value="GLUTAMATE RACEMASE"/>
    <property type="match status" value="1"/>
</dbReference>
<dbReference type="Pfam" id="PF01177">
    <property type="entry name" value="Asp_Glu_race"/>
    <property type="match status" value="1"/>
</dbReference>
<dbReference type="SUPFAM" id="SSF53681">
    <property type="entry name" value="Aspartate/glutamate racemase"/>
    <property type="match status" value="2"/>
</dbReference>
<dbReference type="PROSITE" id="PS00923">
    <property type="entry name" value="ASP_GLU_RACEMASE_1"/>
    <property type="match status" value="1"/>
</dbReference>
<dbReference type="PROSITE" id="PS00924">
    <property type="entry name" value="ASP_GLU_RACEMASE_2"/>
    <property type="match status" value="1"/>
</dbReference>
<feature type="chain" id="PRO_1000125606" description="Glutamate racemase">
    <location>
        <begin position="1"/>
        <end position="257"/>
    </location>
</feature>
<feature type="active site" description="Proton donor/acceptor" evidence="1">
    <location>
        <position position="75"/>
    </location>
</feature>
<feature type="active site" description="Proton donor/acceptor" evidence="1">
    <location>
        <position position="185"/>
    </location>
</feature>
<feature type="binding site" evidence="1">
    <location>
        <begin position="12"/>
        <end position="13"/>
    </location>
    <ligand>
        <name>substrate</name>
    </ligand>
</feature>
<feature type="binding site" evidence="1">
    <location>
        <begin position="44"/>
        <end position="45"/>
    </location>
    <ligand>
        <name>substrate</name>
    </ligand>
</feature>
<feature type="binding site" evidence="1">
    <location>
        <begin position="76"/>
        <end position="77"/>
    </location>
    <ligand>
        <name>substrate</name>
    </ligand>
</feature>
<feature type="binding site" evidence="1">
    <location>
        <begin position="186"/>
        <end position="187"/>
    </location>
    <ligand>
        <name>substrate</name>
    </ligand>
</feature>
<evidence type="ECO:0000255" key="1">
    <source>
        <dbReference type="HAMAP-Rule" id="MF_00258"/>
    </source>
</evidence>
<organism>
    <name type="scientific">Clostridium botulinum (strain Kyoto / Type A2)</name>
    <dbReference type="NCBI Taxonomy" id="536232"/>
    <lineage>
        <taxon>Bacteria</taxon>
        <taxon>Bacillati</taxon>
        <taxon>Bacillota</taxon>
        <taxon>Clostridia</taxon>
        <taxon>Eubacteriales</taxon>
        <taxon>Clostridiaceae</taxon>
        <taxon>Clostridium</taxon>
    </lineage>
</organism>
<proteinExistence type="inferred from homology"/>
<name>MURI_CLOBJ</name>
<comment type="function">
    <text evidence="1">Provides the (R)-glutamate required for cell wall biosynthesis.</text>
</comment>
<comment type="catalytic activity">
    <reaction evidence="1">
        <text>L-glutamate = D-glutamate</text>
        <dbReference type="Rhea" id="RHEA:12813"/>
        <dbReference type="ChEBI" id="CHEBI:29985"/>
        <dbReference type="ChEBI" id="CHEBI:29986"/>
        <dbReference type="EC" id="5.1.1.3"/>
    </reaction>
</comment>
<comment type="pathway">
    <text evidence="1">Cell wall biogenesis; peptidoglycan biosynthesis.</text>
</comment>
<comment type="similarity">
    <text evidence="1">Belongs to the aspartate/glutamate racemases family.</text>
</comment>
<keyword id="KW-0133">Cell shape</keyword>
<keyword id="KW-0961">Cell wall biogenesis/degradation</keyword>
<keyword id="KW-0413">Isomerase</keyword>
<keyword id="KW-0573">Peptidoglycan synthesis</keyword>
<protein>
    <recommendedName>
        <fullName evidence="1">Glutamate racemase</fullName>
        <ecNumber evidence="1">5.1.1.3</ecNumber>
    </recommendedName>
</protein>